<feature type="chain" id="PRO_0000374155" description="tRNA-2-methylthio-N(6)-dimethylallyladenosine synthase">
    <location>
        <begin position="1"/>
        <end position="475"/>
    </location>
</feature>
<feature type="domain" description="MTTase N-terminal" evidence="1">
    <location>
        <begin position="27"/>
        <end position="144"/>
    </location>
</feature>
<feature type="domain" description="Radical SAM core" evidence="2">
    <location>
        <begin position="167"/>
        <end position="400"/>
    </location>
</feature>
<feature type="domain" description="TRAM" evidence="1">
    <location>
        <begin position="403"/>
        <end position="466"/>
    </location>
</feature>
<feature type="region of interest" description="Disordered" evidence="3">
    <location>
        <begin position="1"/>
        <end position="25"/>
    </location>
</feature>
<feature type="compositionally biased region" description="Basic and acidic residues" evidence="3">
    <location>
        <begin position="1"/>
        <end position="10"/>
    </location>
</feature>
<feature type="compositionally biased region" description="Polar residues" evidence="3">
    <location>
        <begin position="12"/>
        <end position="23"/>
    </location>
</feature>
<feature type="binding site" evidence="1">
    <location>
        <position position="36"/>
    </location>
    <ligand>
        <name>[4Fe-4S] cluster</name>
        <dbReference type="ChEBI" id="CHEBI:49883"/>
        <label>1</label>
    </ligand>
</feature>
<feature type="binding site" evidence="1">
    <location>
        <position position="73"/>
    </location>
    <ligand>
        <name>[4Fe-4S] cluster</name>
        <dbReference type="ChEBI" id="CHEBI:49883"/>
        <label>1</label>
    </ligand>
</feature>
<feature type="binding site" evidence="1">
    <location>
        <position position="107"/>
    </location>
    <ligand>
        <name>[4Fe-4S] cluster</name>
        <dbReference type="ChEBI" id="CHEBI:49883"/>
        <label>1</label>
    </ligand>
</feature>
<feature type="binding site" evidence="1">
    <location>
        <position position="181"/>
    </location>
    <ligand>
        <name>[4Fe-4S] cluster</name>
        <dbReference type="ChEBI" id="CHEBI:49883"/>
        <label>2</label>
        <note>4Fe-4S-S-AdoMet</note>
    </ligand>
</feature>
<feature type="binding site" evidence="1">
    <location>
        <position position="185"/>
    </location>
    <ligand>
        <name>[4Fe-4S] cluster</name>
        <dbReference type="ChEBI" id="CHEBI:49883"/>
        <label>2</label>
        <note>4Fe-4S-S-AdoMet</note>
    </ligand>
</feature>
<feature type="binding site" evidence="1">
    <location>
        <position position="188"/>
    </location>
    <ligand>
        <name>[4Fe-4S] cluster</name>
        <dbReference type="ChEBI" id="CHEBI:49883"/>
        <label>2</label>
        <note>4Fe-4S-S-AdoMet</note>
    </ligand>
</feature>
<dbReference type="EC" id="2.8.4.3" evidence="1"/>
<dbReference type="EMBL" id="AM167904">
    <property type="protein sequence ID" value="CAJ48446.1"/>
    <property type="molecule type" value="Genomic_DNA"/>
</dbReference>
<dbReference type="RefSeq" id="WP_012416527.1">
    <property type="nucleotide sequence ID" value="NC_010645.1"/>
</dbReference>
<dbReference type="SMR" id="Q2KWE0"/>
<dbReference type="STRING" id="360910.BAV0835"/>
<dbReference type="GeneID" id="92935978"/>
<dbReference type="KEGG" id="bav:BAV0835"/>
<dbReference type="eggNOG" id="COG0621">
    <property type="taxonomic scope" value="Bacteria"/>
</dbReference>
<dbReference type="HOGENOM" id="CLU_018697_2_0_4"/>
<dbReference type="OrthoDB" id="9805215at2"/>
<dbReference type="Proteomes" id="UP000001977">
    <property type="component" value="Chromosome"/>
</dbReference>
<dbReference type="GO" id="GO:0005829">
    <property type="term" value="C:cytosol"/>
    <property type="evidence" value="ECO:0007669"/>
    <property type="project" value="TreeGrafter"/>
</dbReference>
<dbReference type="GO" id="GO:0051539">
    <property type="term" value="F:4 iron, 4 sulfur cluster binding"/>
    <property type="evidence" value="ECO:0007669"/>
    <property type="project" value="UniProtKB-UniRule"/>
</dbReference>
<dbReference type="GO" id="GO:0046872">
    <property type="term" value="F:metal ion binding"/>
    <property type="evidence" value="ECO:0007669"/>
    <property type="project" value="UniProtKB-KW"/>
</dbReference>
<dbReference type="GO" id="GO:0035597">
    <property type="term" value="F:N6-isopentenyladenosine methylthiotransferase activity"/>
    <property type="evidence" value="ECO:0007669"/>
    <property type="project" value="TreeGrafter"/>
</dbReference>
<dbReference type="CDD" id="cd01335">
    <property type="entry name" value="Radical_SAM"/>
    <property type="match status" value="1"/>
</dbReference>
<dbReference type="FunFam" id="3.40.50.12160:FF:000001">
    <property type="entry name" value="tRNA-2-methylthio-N(6)-dimethylallyladenosine synthase"/>
    <property type="match status" value="1"/>
</dbReference>
<dbReference type="FunFam" id="3.80.30.20:FF:000001">
    <property type="entry name" value="tRNA-2-methylthio-N(6)-dimethylallyladenosine synthase 2"/>
    <property type="match status" value="1"/>
</dbReference>
<dbReference type="Gene3D" id="3.40.50.12160">
    <property type="entry name" value="Methylthiotransferase, N-terminal domain"/>
    <property type="match status" value="1"/>
</dbReference>
<dbReference type="Gene3D" id="3.80.30.20">
    <property type="entry name" value="tm_1862 like domain"/>
    <property type="match status" value="1"/>
</dbReference>
<dbReference type="HAMAP" id="MF_01864">
    <property type="entry name" value="tRNA_metthiotr_MiaB"/>
    <property type="match status" value="1"/>
</dbReference>
<dbReference type="InterPro" id="IPR006638">
    <property type="entry name" value="Elp3/MiaA/NifB-like_rSAM"/>
</dbReference>
<dbReference type="InterPro" id="IPR005839">
    <property type="entry name" value="Methylthiotransferase"/>
</dbReference>
<dbReference type="InterPro" id="IPR020612">
    <property type="entry name" value="Methylthiotransferase_CS"/>
</dbReference>
<dbReference type="InterPro" id="IPR013848">
    <property type="entry name" value="Methylthiotransferase_N"/>
</dbReference>
<dbReference type="InterPro" id="IPR038135">
    <property type="entry name" value="Methylthiotransferase_N_sf"/>
</dbReference>
<dbReference type="InterPro" id="IPR006463">
    <property type="entry name" value="MiaB_methiolase"/>
</dbReference>
<dbReference type="InterPro" id="IPR007197">
    <property type="entry name" value="rSAM"/>
</dbReference>
<dbReference type="InterPro" id="IPR023404">
    <property type="entry name" value="rSAM_horseshoe"/>
</dbReference>
<dbReference type="InterPro" id="IPR002792">
    <property type="entry name" value="TRAM_dom"/>
</dbReference>
<dbReference type="NCBIfam" id="TIGR01574">
    <property type="entry name" value="miaB-methiolase"/>
    <property type="match status" value="1"/>
</dbReference>
<dbReference type="NCBIfam" id="TIGR00089">
    <property type="entry name" value="MiaB/RimO family radical SAM methylthiotransferase"/>
    <property type="match status" value="1"/>
</dbReference>
<dbReference type="PANTHER" id="PTHR43020">
    <property type="entry name" value="CDK5 REGULATORY SUBUNIT-ASSOCIATED PROTEIN 1"/>
    <property type="match status" value="1"/>
</dbReference>
<dbReference type="PANTHER" id="PTHR43020:SF2">
    <property type="entry name" value="MITOCHONDRIAL TRNA METHYLTHIOTRANSFERASE CDK5RAP1"/>
    <property type="match status" value="1"/>
</dbReference>
<dbReference type="Pfam" id="PF04055">
    <property type="entry name" value="Radical_SAM"/>
    <property type="match status" value="1"/>
</dbReference>
<dbReference type="Pfam" id="PF01938">
    <property type="entry name" value="TRAM"/>
    <property type="match status" value="1"/>
</dbReference>
<dbReference type="Pfam" id="PF00919">
    <property type="entry name" value="UPF0004"/>
    <property type="match status" value="1"/>
</dbReference>
<dbReference type="SFLD" id="SFLDF00273">
    <property type="entry name" value="(dimethylallyl)adenosine_tRNA"/>
    <property type="match status" value="1"/>
</dbReference>
<dbReference type="SFLD" id="SFLDG01082">
    <property type="entry name" value="B12-binding_domain_containing"/>
    <property type="match status" value="1"/>
</dbReference>
<dbReference type="SFLD" id="SFLDS00029">
    <property type="entry name" value="Radical_SAM"/>
    <property type="match status" value="1"/>
</dbReference>
<dbReference type="SMART" id="SM00729">
    <property type="entry name" value="Elp3"/>
    <property type="match status" value="1"/>
</dbReference>
<dbReference type="SUPFAM" id="SSF102114">
    <property type="entry name" value="Radical SAM enzymes"/>
    <property type="match status" value="1"/>
</dbReference>
<dbReference type="PROSITE" id="PS51449">
    <property type="entry name" value="MTTASE_N"/>
    <property type="match status" value="1"/>
</dbReference>
<dbReference type="PROSITE" id="PS01278">
    <property type="entry name" value="MTTASE_RADICAL"/>
    <property type="match status" value="1"/>
</dbReference>
<dbReference type="PROSITE" id="PS51918">
    <property type="entry name" value="RADICAL_SAM"/>
    <property type="match status" value="1"/>
</dbReference>
<dbReference type="PROSITE" id="PS50926">
    <property type="entry name" value="TRAM"/>
    <property type="match status" value="1"/>
</dbReference>
<comment type="function">
    <text evidence="1">Catalyzes the methylthiolation of N6-(dimethylallyl)adenosine (i(6)A), leading to the formation of 2-methylthio-N6-(dimethylallyl)adenosine (ms(2)i(6)A) at position 37 in tRNAs that read codons beginning with uridine.</text>
</comment>
<comment type="catalytic activity">
    <reaction evidence="1">
        <text>N(6)-dimethylallyladenosine(37) in tRNA + (sulfur carrier)-SH + AH2 + 2 S-adenosyl-L-methionine = 2-methylsulfanyl-N(6)-dimethylallyladenosine(37) in tRNA + (sulfur carrier)-H + 5'-deoxyadenosine + L-methionine + A + S-adenosyl-L-homocysteine + 2 H(+)</text>
        <dbReference type="Rhea" id="RHEA:37067"/>
        <dbReference type="Rhea" id="RHEA-COMP:10375"/>
        <dbReference type="Rhea" id="RHEA-COMP:10376"/>
        <dbReference type="Rhea" id="RHEA-COMP:14737"/>
        <dbReference type="Rhea" id="RHEA-COMP:14739"/>
        <dbReference type="ChEBI" id="CHEBI:13193"/>
        <dbReference type="ChEBI" id="CHEBI:15378"/>
        <dbReference type="ChEBI" id="CHEBI:17319"/>
        <dbReference type="ChEBI" id="CHEBI:17499"/>
        <dbReference type="ChEBI" id="CHEBI:29917"/>
        <dbReference type="ChEBI" id="CHEBI:57844"/>
        <dbReference type="ChEBI" id="CHEBI:57856"/>
        <dbReference type="ChEBI" id="CHEBI:59789"/>
        <dbReference type="ChEBI" id="CHEBI:64428"/>
        <dbReference type="ChEBI" id="CHEBI:74415"/>
        <dbReference type="ChEBI" id="CHEBI:74417"/>
        <dbReference type="EC" id="2.8.4.3"/>
    </reaction>
</comment>
<comment type="cofactor">
    <cofactor evidence="1">
        <name>[4Fe-4S] cluster</name>
        <dbReference type="ChEBI" id="CHEBI:49883"/>
    </cofactor>
    <text evidence="1">Binds 2 [4Fe-4S] clusters. One cluster is coordinated with 3 cysteines and an exchangeable S-adenosyl-L-methionine.</text>
</comment>
<comment type="subunit">
    <text evidence="1">Monomer.</text>
</comment>
<comment type="subcellular location">
    <subcellularLocation>
        <location evidence="1">Cytoplasm</location>
    </subcellularLocation>
</comment>
<comment type="similarity">
    <text evidence="1">Belongs to the methylthiotransferase family. MiaB subfamily.</text>
</comment>
<reference key="1">
    <citation type="journal article" date="2006" name="J. Bacteriol.">
        <title>Comparison of the genome sequence of the poultry pathogen Bordetella avium with those of B. bronchiseptica, B. pertussis, and B. parapertussis reveals extensive diversity in surface structures associated with host interaction.</title>
        <authorList>
            <person name="Sebaihia M."/>
            <person name="Preston A."/>
            <person name="Maskell D.J."/>
            <person name="Kuzmiak H."/>
            <person name="Connell T.D."/>
            <person name="King N.D."/>
            <person name="Orndorff P.E."/>
            <person name="Miyamoto D.M."/>
            <person name="Thomson N.R."/>
            <person name="Harris D."/>
            <person name="Goble A."/>
            <person name="Lord A."/>
            <person name="Murphy L."/>
            <person name="Quail M.A."/>
            <person name="Rutter S."/>
            <person name="Squares R."/>
            <person name="Squares S."/>
            <person name="Woodward J."/>
            <person name="Parkhill J."/>
            <person name="Temple L.M."/>
        </authorList>
    </citation>
    <scope>NUCLEOTIDE SEQUENCE [LARGE SCALE GENOMIC DNA]</scope>
    <source>
        <strain>197N</strain>
    </source>
</reference>
<evidence type="ECO:0000255" key="1">
    <source>
        <dbReference type="HAMAP-Rule" id="MF_01864"/>
    </source>
</evidence>
<evidence type="ECO:0000255" key="2">
    <source>
        <dbReference type="PROSITE-ProRule" id="PRU01266"/>
    </source>
</evidence>
<evidence type="ECO:0000256" key="3">
    <source>
        <dbReference type="SAM" id="MobiDB-lite"/>
    </source>
</evidence>
<sequence length="475" mass="52778">MHETTLKREGASTPSNPTPSTHAAGSGKIYIRTFGCQMNEYDSDKMVDVLREDQGLEMTDNPEEADVILFNTCSVREKAQEKVFSDLGRVQHLKKLNPNLVIGVGGCVASQEGAAIVKRAPYVDVVFGPQTLHRLPELIRRRRDEGVSQVDISFPEIEKFDNMPPSRVEGATAFVSIMEGCSKYCSFCVVPYTRGEEVSRPFEDVLTEVADLADQGVREVTLLGQNVNAYRGRIEGSDEIADFAMLLEYVHEIPGIERIRYTTSHPKEMTQRMVEAYARLPKLVSFLHLPVQAGSDRVLAAMKRGYTALEFKSVVRKLRAARPNLTLSSDFIVGFPGETEEDFQKTMKLIADVGFDTSFSFVYSRRPGTPAADLQDDTPQDVKLKRLQQLQALINEQAAAIAQSMVGTRQRLLVEGPSRRDPNELMGRTENNRIVNFEGPSRLIGNMVDVIITHAFTNSLRGRVAGTEESDQGAA</sequence>
<name>MIAB_BORA1</name>
<proteinExistence type="inferred from homology"/>
<protein>
    <recommendedName>
        <fullName evidence="1">tRNA-2-methylthio-N(6)-dimethylallyladenosine synthase</fullName>
        <ecNumber evidence="1">2.8.4.3</ecNumber>
    </recommendedName>
    <alternativeName>
        <fullName evidence="1">(Dimethylallyl)adenosine tRNA methylthiotransferase MiaB</fullName>
    </alternativeName>
    <alternativeName>
        <fullName evidence="1">tRNA-i(6)A37 methylthiotransferase</fullName>
    </alternativeName>
</protein>
<gene>
    <name evidence="1" type="primary">miaB</name>
    <name type="ordered locus">BAV0835</name>
</gene>
<accession>Q2KWE0</accession>
<organism>
    <name type="scientific">Bordetella avium (strain 197N)</name>
    <dbReference type="NCBI Taxonomy" id="360910"/>
    <lineage>
        <taxon>Bacteria</taxon>
        <taxon>Pseudomonadati</taxon>
        <taxon>Pseudomonadota</taxon>
        <taxon>Betaproteobacteria</taxon>
        <taxon>Burkholderiales</taxon>
        <taxon>Alcaligenaceae</taxon>
        <taxon>Bordetella</taxon>
    </lineage>
</organism>
<keyword id="KW-0004">4Fe-4S</keyword>
<keyword id="KW-0963">Cytoplasm</keyword>
<keyword id="KW-0408">Iron</keyword>
<keyword id="KW-0411">Iron-sulfur</keyword>
<keyword id="KW-0479">Metal-binding</keyword>
<keyword id="KW-1185">Reference proteome</keyword>
<keyword id="KW-0949">S-adenosyl-L-methionine</keyword>
<keyword id="KW-0808">Transferase</keyword>
<keyword id="KW-0819">tRNA processing</keyword>